<proteinExistence type="evidence at protein level"/>
<name>REXO3_YEAST</name>
<comment type="function">
    <text evidence="1">3' to 5' exoribonuclease required for proper 3' end maturation of MRP RNA and of the U5L snRNA.</text>
</comment>
<comment type="subcellular location">
    <subcellularLocation>
        <location evidence="2">Cytoplasm</location>
    </subcellularLocation>
    <subcellularLocation>
        <location evidence="2">Nucleus</location>
    </subcellularLocation>
</comment>
<comment type="similarity">
    <text evidence="3">Belongs to the REXO1/REXO3 family.</text>
</comment>
<organism>
    <name type="scientific">Saccharomyces cerevisiae (strain ATCC 204508 / S288c)</name>
    <name type="common">Baker's yeast</name>
    <dbReference type="NCBI Taxonomy" id="559292"/>
    <lineage>
        <taxon>Eukaryota</taxon>
        <taxon>Fungi</taxon>
        <taxon>Dikarya</taxon>
        <taxon>Ascomycota</taxon>
        <taxon>Saccharomycotina</taxon>
        <taxon>Saccharomycetes</taxon>
        <taxon>Saccharomycetales</taxon>
        <taxon>Saccharomycetaceae</taxon>
        <taxon>Saccharomyces</taxon>
    </lineage>
</organism>
<dbReference type="EC" id="3.1.-.-"/>
<dbReference type="EMBL" id="X89514">
    <property type="protein sequence ID" value="CAA61685.1"/>
    <property type="molecule type" value="Genomic_DNA"/>
</dbReference>
<dbReference type="EMBL" id="U53876">
    <property type="protein sequence ID" value="AAB67549.1"/>
    <property type="molecule type" value="Genomic_DNA"/>
</dbReference>
<dbReference type="EMBL" id="U53878">
    <property type="protein sequence ID" value="AAB67561.1"/>
    <property type="molecule type" value="Genomic_DNA"/>
</dbReference>
<dbReference type="EMBL" id="Z73279">
    <property type="protein sequence ID" value="CAA97672.1"/>
    <property type="molecule type" value="Genomic_DNA"/>
</dbReference>
<dbReference type="EMBL" id="Z73280">
    <property type="protein sequence ID" value="CAA97675.1"/>
    <property type="molecule type" value="Genomic_DNA"/>
</dbReference>
<dbReference type="EMBL" id="BK006945">
    <property type="protein sequence ID" value="DAA09423.1"/>
    <property type="molecule type" value="Genomic_DNA"/>
</dbReference>
<dbReference type="PIR" id="S64944">
    <property type="entry name" value="S64944"/>
</dbReference>
<dbReference type="RefSeq" id="NP_013208.1">
    <property type="nucleotide sequence ID" value="NM_001181994.1"/>
</dbReference>
<dbReference type="SMR" id="Q12090"/>
<dbReference type="BioGRID" id="31380">
    <property type="interactions" value="83"/>
</dbReference>
<dbReference type="FunCoup" id="Q12090">
    <property type="interactions" value="112"/>
</dbReference>
<dbReference type="IntAct" id="Q12090">
    <property type="interactions" value="2"/>
</dbReference>
<dbReference type="STRING" id="4932.YLR107W"/>
<dbReference type="iPTMnet" id="Q12090"/>
<dbReference type="PaxDb" id="4932-YLR107W"/>
<dbReference type="PeptideAtlas" id="Q12090"/>
<dbReference type="EnsemblFungi" id="YLR107W_mRNA">
    <property type="protein sequence ID" value="YLR107W"/>
    <property type="gene ID" value="YLR107W"/>
</dbReference>
<dbReference type="GeneID" id="850797"/>
<dbReference type="KEGG" id="sce:YLR107W"/>
<dbReference type="AGR" id="SGD:S000004097"/>
<dbReference type="SGD" id="S000004097">
    <property type="gene designation" value="REX3"/>
</dbReference>
<dbReference type="VEuPathDB" id="FungiDB:YLR107W"/>
<dbReference type="eggNOG" id="KOG2248">
    <property type="taxonomic scope" value="Eukaryota"/>
</dbReference>
<dbReference type="GeneTree" id="ENSGT00940000169529"/>
<dbReference type="HOGENOM" id="CLU_022453_5_4_1"/>
<dbReference type="InParanoid" id="Q12090"/>
<dbReference type="OMA" id="IDCEMGF"/>
<dbReference type="OrthoDB" id="3996471at2759"/>
<dbReference type="BioCyc" id="YEAST:G3O-32255-MONOMER"/>
<dbReference type="BioGRID-ORCS" id="850797">
    <property type="hits" value="0 hits in 10 CRISPR screens"/>
</dbReference>
<dbReference type="PRO" id="PR:Q12090"/>
<dbReference type="Proteomes" id="UP000002311">
    <property type="component" value="Chromosome XII"/>
</dbReference>
<dbReference type="RNAct" id="Q12090">
    <property type="molecule type" value="protein"/>
</dbReference>
<dbReference type="GO" id="GO:0005737">
    <property type="term" value="C:cytoplasm"/>
    <property type="evidence" value="ECO:0007005"/>
    <property type="project" value="SGD"/>
</dbReference>
<dbReference type="GO" id="GO:0005634">
    <property type="term" value="C:nucleus"/>
    <property type="evidence" value="ECO:0007005"/>
    <property type="project" value="SGD"/>
</dbReference>
<dbReference type="GO" id="GO:0008408">
    <property type="term" value="F:3'-5' exonuclease activity"/>
    <property type="evidence" value="ECO:0000250"/>
    <property type="project" value="SGD"/>
</dbReference>
<dbReference type="GO" id="GO:0000175">
    <property type="term" value="F:3'-5'-RNA exonuclease activity"/>
    <property type="evidence" value="ECO:0000315"/>
    <property type="project" value="SGD"/>
</dbReference>
<dbReference type="GO" id="GO:0004527">
    <property type="term" value="F:exonuclease activity"/>
    <property type="evidence" value="ECO:0000318"/>
    <property type="project" value="GO_Central"/>
</dbReference>
<dbReference type="GO" id="GO:0003676">
    <property type="term" value="F:nucleic acid binding"/>
    <property type="evidence" value="ECO:0007669"/>
    <property type="project" value="InterPro"/>
</dbReference>
<dbReference type="GO" id="GO:0000467">
    <property type="term" value="P:exonucleolytic trimming to generate mature 3'-end of 5.8S rRNA from tricistronic rRNA transcript (SSU-rRNA, 5.8S rRNA, LSU-rRNA)"/>
    <property type="evidence" value="ECO:0000316"/>
    <property type="project" value="SGD"/>
</dbReference>
<dbReference type="GO" id="GO:0043628">
    <property type="term" value="P:regulatory ncRNA 3'-end processing"/>
    <property type="evidence" value="ECO:0000315"/>
    <property type="project" value="SGD"/>
</dbReference>
<dbReference type="GO" id="GO:0031125">
    <property type="term" value="P:rRNA 3'-end processing"/>
    <property type="evidence" value="ECO:0000318"/>
    <property type="project" value="GO_Central"/>
</dbReference>
<dbReference type="GO" id="GO:0034476">
    <property type="term" value="P:U5 snRNA 3'-end processing"/>
    <property type="evidence" value="ECO:0000316"/>
    <property type="project" value="SGD"/>
</dbReference>
<dbReference type="CDD" id="cd06145">
    <property type="entry name" value="REX1_like"/>
    <property type="match status" value="1"/>
</dbReference>
<dbReference type="FunFam" id="3.30.420.10:FF:000031">
    <property type="entry name" value="RNA exonuclease 1"/>
    <property type="match status" value="1"/>
</dbReference>
<dbReference type="Gene3D" id="3.30.420.10">
    <property type="entry name" value="Ribonuclease H-like superfamily/Ribonuclease H"/>
    <property type="match status" value="1"/>
</dbReference>
<dbReference type="InterPro" id="IPR013520">
    <property type="entry name" value="Exonuclease_RNaseT/DNA_pol3"/>
</dbReference>
<dbReference type="InterPro" id="IPR034922">
    <property type="entry name" value="REX1-like_exo"/>
</dbReference>
<dbReference type="InterPro" id="IPR047021">
    <property type="entry name" value="REXO1/3/4-like"/>
</dbReference>
<dbReference type="InterPro" id="IPR012337">
    <property type="entry name" value="RNaseH-like_sf"/>
</dbReference>
<dbReference type="InterPro" id="IPR036397">
    <property type="entry name" value="RNaseH_sf"/>
</dbReference>
<dbReference type="PANTHER" id="PTHR12801:SF118">
    <property type="entry name" value="RNA EXONUCLEASE 3"/>
    <property type="match status" value="1"/>
</dbReference>
<dbReference type="PANTHER" id="PTHR12801">
    <property type="entry name" value="RNA EXONUCLEASE REXO1 / RECO3 FAMILY MEMBER-RELATED"/>
    <property type="match status" value="1"/>
</dbReference>
<dbReference type="Pfam" id="PF00929">
    <property type="entry name" value="RNase_T"/>
    <property type="match status" value="1"/>
</dbReference>
<dbReference type="SMART" id="SM00479">
    <property type="entry name" value="EXOIII"/>
    <property type="match status" value="1"/>
</dbReference>
<dbReference type="SUPFAM" id="SSF53098">
    <property type="entry name" value="Ribonuclease H-like"/>
    <property type="match status" value="1"/>
</dbReference>
<feature type="chain" id="PRO_0000120937" description="RNA exonuclease 3">
    <location>
        <begin position="1"/>
        <end position="404"/>
    </location>
</feature>
<feature type="domain" description="Exonuclease">
    <location>
        <begin position="243"/>
        <end position="389"/>
    </location>
</feature>
<sequence length="404" mass="45880">MGSLLRPVDLVNQPLGFQERYKILQKLFKQLQKAYAHTKGTNIDLERLATRLEVHVAKNSLSGQSYKFNMSILLRDVLKYKGDLSKIKINGRPLKGAKPHLSSIGNANSITTKSKAMEALKALILDSKVLEKNGYIVKEMQNKTNDDNSTQLYAPCLRCSSNFKKTDIMEKTLCRYHPLKRIYNRDTKNHQYPCCGETTDSVSFLRLGCKTFFHHVFRGESYDELCKISKFSSTDDIDGVENVLSLDCEMAFTSLGYEMIRLTIVDFFTGKTLFDHVIQPIGDIVDLNSDFSGVHEIDRTNCPTYKEALDVFLSENLINKNSILIGHGLENDLNVMRLFHNKVIDTAILYSRTKFKVSLKNLAFEVLSRKIQNGEHDSSQDAIATMDVVKVKIGISPSQNKWEK</sequence>
<accession>Q12090</accession>
<accession>D6VYA7</accession>
<accession>Q7LI70</accession>
<keyword id="KW-0963">Cytoplasm</keyword>
<keyword id="KW-0269">Exonuclease</keyword>
<keyword id="KW-0378">Hydrolase</keyword>
<keyword id="KW-0540">Nuclease</keyword>
<keyword id="KW-0539">Nucleus</keyword>
<keyword id="KW-1185">Reference proteome</keyword>
<keyword id="KW-0698">rRNA processing</keyword>
<gene>
    <name type="primary">REX3</name>
    <name type="ordered locus">YLR107W</name>
    <name type="ORF">L2904</name>
</gene>
<reference key="1">
    <citation type="journal article" date="1997" name="Yeast">
        <title>Sequence analysis of a 37.6 kbp cosmid clone from the right arm of Saccharomyces cerevisiae chromosome XII, carrying YAP3, HOG1, SNR6, tRNA-Arg3 and 23 new open reading frames, among which several homologies to proteins involved in cell division control and to mammalian growth factors and other animal proteins are found.</title>
        <authorList>
            <person name="Verhasselt P."/>
            <person name="Volckaert G."/>
        </authorList>
    </citation>
    <scope>NUCLEOTIDE SEQUENCE [GENOMIC DNA]</scope>
    <source>
        <strain>ATCC 90840 / EAY235 / FY23</strain>
    </source>
</reference>
<reference key="2">
    <citation type="journal article" date="1997" name="Nature">
        <title>The nucleotide sequence of Saccharomyces cerevisiae chromosome XII.</title>
        <authorList>
            <person name="Johnston M."/>
            <person name="Hillier L.W."/>
            <person name="Riles L."/>
            <person name="Albermann K."/>
            <person name="Andre B."/>
            <person name="Ansorge W."/>
            <person name="Benes V."/>
            <person name="Brueckner M."/>
            <person name="Delius H."/>
            <person name="Dubois E."/>
            <person name="Duesterhoeft A."/>
            <person name="Entian K.-D."/>
            <person name="Floeth M."/>
            <person name="Goffeau A."/>
            <person name="Hebling U."/>
            <person name="Heumann K."/>
            <person name="Heuss-Neitzel D."/>
            <person name="Hilbert H."/>
            <person name="Hilger F."/>
            <person name="Kleine K."/>
            <person name="Koetter P."/>
            <person name="Louis E.J."/>
            <person name="Messenguy F."/>
            <person name="Mewes H.-W."/>
            <person name="Miosga T."/>
            <person name="Moestl D."/>
            <person name="Mueller-Auer S."/>
            <person name="Nentwich U."/>
            <person name="Obermaier B."/>
            <person name="Piravandi E."/>
            <person name="Pohl T.M."/>
            <person name="Portetelle D."/>
            <person name="Purnelle B."/>
            <person name="Rechmann S."/>
            <person name="Rieger M."/>
            <person name="Rinke M."/>
            <person name="Rose M."/>
            <person name="Scharfe M."/>
            <person name="Scherens B."/>
            <person name="Scholler P."/>
            <person name="Schwager C."/>
            <person name="Schwarz S."/>
            <person name="Underwood A.P."/>
            <person name="Urrestarazu L.A."/>
            <person name="Vandenbol M."/>
            <person name="Verhasselt P."/>
            <person name="Vierendeels F."/>
            <person name="Voet M."/>
            <person name="Volckaert G."/>
            <person name="Voss H."/>
            <person name="Wambutt R."/>
            <person name="Wedler E."/>
            <person name="Wedler H."/>
            <person name="Zimmermann F.K."/>
            <person name="Zollner A."/>
            <person name="Hani J."/>
            <person name="Hoheisel J.D."/>
        </authorList>
    </citation>
    <scope>NUCLEOTIDE SEQUENCE [LARGE SCALE GENOMIC DNA]</scope>
    <source>
        <strain>ATCC 204508 / S288c</strain>
    </source>
</reference>
<reference key="3">
    <citation type="journal article" date="2014" name="G3 (Bethesda)">
        <title>The reference genome sequence of Saccharomyces cerevisiae: Then and now.</title>
        <authorList>
            <person name="Engel S.R."/>
            <person name="Dietrich F.S."/>
            <person name="Fisk D.G."/>
            <person name="Binkley G."/>
            <person name="Balakrishnan R."/>
            <person name="Costanzo M.C."/>
            <person name="Dwight S.S."/>
            <person name="Hitz B.C."/>
            <person name="Karra K."/>
            <person name="Nash R.S."/>
            <person name="Weng S."/>
            <person name="Wong E.D."/>
            <person name="Lloyd P."/>
            <person name="Skrzypek M.S."/>
            <person name="Miyasato S.R."/>
            <person name="Simison M."/>
            <person name="Cherry J.M."/>
        </authorList>
    </citation>
    <scope>GENOME REANNOTATION</scope>
    <source>
        <strain>ATCC 204508 / S288c</strain>
    </source>
</reference>
<reference key="4">
    <citation type="journal article" date="2000" name="EMBO J.">
        <title>Three conserved members of the RNase D family have unique and overlapping functions in the processing of 5S, 5.8S, U4, U5, RNase MRP and RNase P RNAs in yeast.</title>
        <authorList>
            <person name="van Hoof A."/>
            <person name="Lennertz P."/>
            <person name="Parker R."/>
        </authorList>
    </citation>
    <scope>FUNCTION</scope>
</reference>
<reference key="5">
    <citation type="journal article" date="2003" name="Nature">
        <title>Global analysis of protein localization in budding yeast.</title>
        <authorList>
            <person name="Huh W.-K."/>
            <person name="Falvo J.V."/>
            <person name="Gerke L.C."/>
            <person name="Carroll A.S."/>
            <person name="Howson R.W."/>
            <person name="Weissman J.S."/>
            <person name="O'Shea E.K."/>
        </authorList>
    </citation>
    <scope>SUBCELLULAR LOCATION [LARGE SCALE ANALYSIS]</scope>
</reference>
<protein>
    <recommendedName>
        <fullName>RNA exonuclease 3</fullName>
        <ecNumber>3.1.-.-</ecNumber>
    </recommendedName>
</protein>
<evidence type="ECO:0000269" key="1">
    <source>
    </source>
</evidence>
<evidence type="ECO:0000269" key="2">
    <source>
    </source>
</evidence>
<evidence type="ECO:0000305" key="3"/>